<gene>
    <name evidence="1" type="primary">macB</name>
    <name type="ordered locus">SPA1857</name>
</gene>
<comment type="function">
    <text evidence="1">Part of the tripartite efflux system MacAB-TolC. MacB is a non-canonical ABC transporter that contains transmembrane domains (TMD), which form a pore in the inner membrane, and an ATP-binding domain (NBD), which is responsible for energy generation. Confers resistance against macrolides.</text>
</comment>
<comment type="subunit">
    <text evidence="1">Homodimer. Part of the tripartite efflux system MacAB-TolC, which is composed of an inner membrane transporter, MacB, a periplasmic membrane fusion protein, MacA, and an outer membrane component, TolC. The complex forms a large protein conduit and can translocate molecules across both the inner and outer membranes. Interacts with MacA.</text>
</comment>
<comment type="subcellular location">
    <subcellularLocation>
        <location evidence="1">Cell inner membrane</location>
        <topology evidence="1">Multi-pass membrane protein</topology>
    </subcellularLocation>
</comment>
<comment type="similarity">
    <text evidence="1">Belongs to the ABC transporter superfamily. Macrolide exporter (TC 3.A.1.122) family.</text>
</comment>
<proteinExistence type="inferred from homology"/>
<organism>
    <name type="scientific">Salmonella paratyphi A (strain ATCC 9150 / SARB42)</name>
    <dbReference type="NCBI Taxonomy" id="295319"/>
    <lineage>
        <taxon>Bacteria</taxon>
        <taxon>Pseudomonadati</taxon>
        <taxon>Pseudomonadota</taxon>
        <taxon>Gammaproteobacteria</taxon>
        <taxon>Enterobacterales</taxon>
        <taxon>Enterobacteriaceae</taxon>
        <taxon>Salmonella</taxon>
    </lineage>
</organism>
<feature type="chain" id="PRO_0000269975" description="Macrolide export ATP-binding/permease protein MacB">
    <location>
        <begin position="1"/>
        <end position="648"/>
    </location>
</feature>
<feature type="transmembrane region" description="Helical" evidence="1">
    <location>
        <begin position="273"/>
        <end position="293"/>
    </location>
</feature>
<feature type="transmembrane region" description="Helical" evidence="1">
    <location>
        <begin position="417"/>
        <end position="437"/>
    </location>
</feature>
<feature type="transmembrane region" description="Helical" evidence="1">
    <location>
        <begin position="523"/>
        <end position="543"/>
    </location>
</feature>
<feature type="transmembrane region" description="Helical" evidence="1">
    <location>
        <begin position="578"/>
        <end position="598"/>
    </location>
</feature>
<feature type="transmembrane region" description="Helical" evidence="1">
    <location>
        <begin position="611"/>
        <end position="631"/>
    </location>
</feature>
<feature type="domain" description="ABC transporter" evidence="1">
    <location>
        <begin position="5"/>
        <end position="243"/>
    </location>
</feature>
<feature type="binding site" evidence="1">
    <location>
        <begin position="41"/>
        <end position="48"/>
    </location>
    <ligand>
        <name>ATP</name>
        <dbReference type="ChEBI" id="CHEBI:30616"/>
    </ligand>
</feature>
<name>MACB_SALPA</name>
<protein>
    <recommendedName>
        <fullName evidence="1">Macrolide export ATP-binding/permease protein MacB</fullName>
        <ecNumber evidence="1">7.6.2.-</ecNumber>
    </recommendedName>
</protein>
<dbReference type="EC" id="7.6.2.-" evidence="1"/>
<dbReference type="EMBL" id="CP000026">
    <property type="protein sequence ID" value="AAV77768.1"/>
    <property type="molecule type" value="Genomic_DNA"/>
</dbReference>
<dbReference type="RefSeq" id="WP_000125879.1">
    <property type="nucleotide sequence ID" value="NC_006511.1"/>
</dbReference>
<dbReference type="SMR" id="Q5PGK9"/>
<dbReference type="KEGG" id="spt:SPA1857"/>
<dbReference type="HOGENOM" id="CLU_000604_78_2_6"/>
<dbReference type="Proteomes" id="UP000008185">
    <property type="component" value="Chromosome"/>
</dbReference>
<dbReference type="GO" id="GO:0005886">
    <property type="term" value="C:plasma membrane"/>
    <property type="evidence" value="ECO:0007669"/>
    <property type="project" value="UniProtKB-SubCell"/>
</dbReference>
<dbReference type="GO" id="GO:0005524">
    <property type="term" value="F:ATP binding"/>
    <property type="evidence" value="ECO:0007669"/>
    <property type="project" value="UniProtKB-KW"/>
</dbReference>
<dbReference type="GO" id="GO:0016887">
    <property type="term" value="F:ATP hydrolysis activity"/>
    <property type="evidence" value="ECO:0007669"/>
    <property type="project" value="InterPro"/>
</dbReference>
<dbReference type="GO" id="GO:0022857">
    <property type="term" value="F:transmembrane transporter activity"/>
    <property type="evidence" value="ECO:0007669"/>
    <property type="project" value="TreeGrafter"/>
</dbReference>
<dbReference type="GO" id="GO:0046677">
    <property type="term" value="P:response to antibiotic"/>
    <property type="evidence" value="ECO:0007669"/>
    <property type="project" value="UniProtKB-KW"/>
</dbReference>
<dbReference type="CDD" id="cd03255">
    <property type="entry name" value="ABC_MJ0796_LolCDE_FtsE"/>
    <property type="match status" value="1"/>
</dbReference>
<dbReference type="FunFam" id="3.40.50.300:FF:000032">
    <property type="entry name" value="Export ABC transporter ATP-binding protein"/>
    <property type="match status" value="1"/>
</dbReference>
<dbReference type="Gene3D" id="3.40.50.300">
    <property type="entry name" value="P-loop containing nucleotide triphosphate hydrolases"/>
    <property type="match status" value="1"/>
</dbReference>
<dbReference type="InterPro" id="IPR003593">
    <property type="entry name" value="AAA+_ATPase"/>
</dbReference>
<dbReference type="InterPro" id="IPR003838">
    <property type="entry name" value="ABC3_permease_C"/>
</dbReference>
<dbReference type="InterPro" id="IPR003439">
    <property type="entry name" value="ABC_transporter-like_ATP-bd"/>
</dbReference>
<dbReference type="InterPro" id="IPR017871">
    <property type="entry name" value="ABC_transporter-like_CS"/>
</dbReference>
<dbReference type="InterPro" id="IPR017911">
    <property type="entry name" value="MacB-like_ATP-bd"/>
</dbReference>
<dbReference type="InterPro" id="IPR025857">
    <property type="entry name" value="MacB_PCD"/>
</dbReference>
<dbReference type="InterPro" id="IPR050250">
    <property type="entry name" value="Macrolide_Exporter_MacB"/>
</dbReference>
<dbReference type="InterPro" id="IPR027417">
    <property type="entry name" value="P-loop_NTPase"/>
</dbReference>
<dbReference type="NCBIfam" id="NF007826">
    <property type="entry name" value="PRK10535.1"/>
    <property type="match status" value="1"/>
</dbReference>
<dbReference type="PANTHER" id="PTHR30572:SF7">
    <property type="entry name" value="MACROLIDE EXPORT ATP-BINDING_PERMEASE PROTEIN MACB"/>
    <property type="match status" value="1"/>
</dbReference>
<dbReference type="PANTHER" id="PTHR30572">
    <property type="entry name" value="MEMBRANE COMPONENT OF TRANSPORTER-RELATED"/>
    <property type="match status" value="1"/>
</dbReference>
<dbReference type="Pfam" id="PF00005">
    <property type="entry name" value="ABC_tran"/>
    <property type="match status" value="1"/>
</dbReference>
<dbReference type="Pfam" id="PF02687">
    <property type="entry name" value="FtsX"/>
    <property type="match status" value="1"/>
</dbReference>
<dbReference type="Pfam" id="PF12704">
    <property type="entry name" value="MacB_PCD"/>
    <property type="match status" value="1"/>
</dbReference>
<dbReference type="SMART" id="SM00382">
    <property type="entry name" value="AAA"/>
    <property type="match status" value="1"/>
</dbReference>
<dbReference type="SUPFAM" id="SSF52540">
    <property type="entry name" value="P-loop containing nucleoside triphosphate hydrolases"/>
    <property type="match status" value="1"/>
</dbReference>
<dbReference type="PROSITE" id="PS00211">
    <property type="entry name" value="ABC_TRANSPORTER_1"/>
    <property type="match status" value="1"/>
</dbReference>
<dbReference type="PROSITE" id="PS50893">
    <property type="entry name" value="ABC_TRANSPORTER_2"/>
    <property type="match status" value="1"/>
</dbReference>
<dbReference type="PROSITE" id="PS51267">
    <property type="entry name" value="MACB"/>
    <property type="match status" value="1"/>
</dbReference>
<keyword id="KW-0046">Antibiotic resistance</keyword>
<keyword id="KW-0067">ATP-binding</keyword>
<keyword id="KW-0997">Cell inner membrane</keyword>
<keyword id="KW-1003">Cell membrane</keyword>
<keyword id="KW-0472">Membrane</keyword>
<keyword id="KW-0547">Nucleotide-binding</keyword>
<keyword id="KW-1278">Translocase</keyword>
<keyword id="KW-0812">Transmembrane</keyword>
<keyword id="KW-1133">Transmembrane helix</keyword>
<keyword id="KW-0813">Transport</keyword>
<evidence type="ECO:0000255" key="1">
    <source>
        <dbReference type="HAMAP-Rule" id="MF_01720"/>
    </source>
</evidence>
<accession>Q5PGK9</accession>
<sequence length="648" mass="70829">MTALLELCNVSRSYPSGEEQVAVLKDISLQIHAGEMVAIVGVSGSGKSTLMNILGCLDKPTSGTYRVAGRDVSTLDPDALAQLRREHFGFIFQRYHLLSHLTAAQNVEIPAVYAGIERKKRQARARELLLRLGLSDRVDYPPSQLSGGQQQRVSIARALMNGGQVILADEPTGALDSHSGEEVMAILRQLRDRGHTVIIVTHDPLIAAQAERIIEIHDGKIVHNPPAQEKKREQGVDAAVVNTAPGWRQFASSFREALSMAWLAMAANKMRTLLTMLGIIIGIASVVSIVVVGDAAKQMVLADIRAMGTNTIDIHPGKDFGDDNPQYRQALKYDDLVAIQKQPWVNSATPSVSKSLRLRYGNIDIAVNANGVSGDYFNVYGMSFREGNTFNAVQQQDRAQVVVLDANTRRQLFPNKANVVGEVVLVGNMPVIVIGVAEEKPSMYGNSNLLQVWLPYSTMSDRIMGQSWLNSITVRVKDGVDSDQAEQQLTRLLTLRHGKKDFFTWNMDSVLKTAEKTTYTLQLFLTLVAVISLVVGGIGVMNIMLVSVTERTREIGIRMAVGARASDVLQQFLIEAMLVCLVGGALGISLSMFIAFMLQLFLPGWEIGFSLTALASAFLCSTFTGILFGWLPARNAARLDPVDALARE</sequence>
<reference key="1">
    <citation type="journal article" date="2004" name="Nat. Genet.">
        <title>Comparison of genome degradation in Paratyphi A and Typhi, human-restricted serovars of Salmonella enterica that cause typhoid.</title>
        <authorList>
            <person name="McClelland M."/>
            <person name="Sanderson K.E."/>
            <person name="Clifton S.W."/>
            <person name="Latreille P."/>
            <person name="Porwollik S."/>
            <person name="Sabo A."/>
            <person name="Meyer R."/>
            <person name="Bieri T."/>
            <person name="Ozersky P."/>
            <person name="McLellan M."/>
            <person name="Harkins C.R."/>
            <person name="Wang C."/>
            <person name="Nguyen C."/>
            <person name="Berghoff A."/>
            <person name="Elliott G."/>
            <person name="Kohlberg S."/>
            <person name="Strong C."/>
            <person name="Du F."/>
            <person name="Carter J."/>
            <person name="Kremizki C."/>
            <person name="Layman D."/>
            <person name="Leonard S."/>
            <person name="Sun H."/>
            <person name="Fulton L."/>
            <person name="Nash W."/>
            <person name="Miner T."/>
            <person name="Minx P."/>
            <person name="Delehaunty K."/>
            <person name="Fronick C."/>
            <person name="Magrini V."/>
            <person name="Nhan M."/>
            <person name="Warren W."/>
            <person name="Florea L."/>
            <person name="Spieth J."/>
            <person name="Wilson R.K."/>
        </authorList>
    </citation>
    <scope>NUCLEOTIDE SEQUENCE [LARGE SCALE GENOMIC DNA]</scope>
    <source>
        <strain>ATCC 9150 / SARB42</strain>
    </source>
</reference>